<organism>
    <name type="scientific">Bordetella bronchiseptica (strain ATCC BAA-588 / NCTC 13252 / RB50)</name>
    <name type="common">Alcaligenes bronchisepticus</name>
    <dbReference type="NCBI Taxonomy" id="257310"/>
    <lineage>
        <taxon>Bacteria</taxon>
        <taxon>Pseudomonadati</taxon>
        <taxon>Pseudomonadota</taxon>
        <taxon>Betaproteobacteria</taxon>
        <taxon>Burkholderiales</taxon>
        <taxon>Alcaligenaceae</taxon>
        <taxon>Bordetella</taxon>
    </lineage>
</organism>
<comment type="function">
    <text evidence="1">Necessary for normal cell division and for the maintenance of normal septation.</text>
</comment>
<comment type="cofactor">
    <cofactor evidence="1">
        <name>Mg(2+)</name>
        <dbReference type="ChEBI" id="CHEBI:18420"/>
    </cofactor>
</comment>
<comment type="similarity">
    <text evidence="1">Belongs to the TRAFAC class TrmE-Era-EngA-EngB-Septin-like GTPase superfamily. EngB GTPase family.</text>
</comment>
<dbReference type="EMBL" id="BX640437">
    <property type="protein sequence ID" value="CAE30566.1"/>
    <property type="molecule type" value="Genomic_DNA"/>
</dbReference>
<dbReference type="SMR" id="Q7WR92"/>
<dbReference type="KEGG" id="bbr:BB0064"/>
<dbReference type="eggNOG" id="COG0218">
    <property type="taxonomic scope" value="Bacteria"/>
</dbReference>
<dbReference type="HOGENOM" id="CLU_033732_1_1_4"/>
<dbReference type="Proteomes" id="UP000001027">
    <property type="component" value="Chromosome"/>
</dbReference>
<dbReference type="GO" id="GO:0005829">
    <property type="term" value="C:cytosol"/>
    <property type="evidence" value="ECO:0007669"/>
    <property type="project" value="TreeGrafter"/>
</dbReference>
<dbReference type="GO" id="GO:0005525">
    <property type="term" value="F:GTP binding"/>
    <property type="evidence" value="ECO:0007669"/>
    <property type="project" value="UniProtKB-UniRule"/>
</dbReference>
<dbReference type="GO" id="GO:0046872">
    <property type="term" value="F:metal ion binding"/>
    <property type="evidence" value="ECO:0007669"/>
    <property type="project" value="UniProtKB-KW"/>
</dbReference>
<dbReference type="GO" id="GO:0000917">
    <property type="term" value="P:division septum assembly"/>
    <property type="evidence" value="ECO:0007669"/>
    <property type="project" value="UniProtKB-KW"/>
</dbReference>
<dbReference type="CDD" id="cd01876">
    <property type="entry name" value="YihA_EngB"/>
    <property type="match status" value="1"/>
</dbReference>
<dbReference type="Gene3D" id="3.40.50.300">
    <property type="entry name" value="P-loop containing nucleotide triphosphate hydrolases"/>
    <property type="match status" value="1"/>
</dbReference>
<dbReference type="HAMAP" id="MF_00321">
    <property type="entry name" value="GTPase_EngB"/>
    <property type="match status" value="1"/>
</dbReference>
<dbReference type="InterPro" id="IPR030393">
    <property type="entry name" value="G_ENGB_dom"/>
</dbReference>
<dbReference type="InterPro" id="IPR006073">
    <property type="entry name" value="GTP-bd"/>
</dbReference>
<dbReference type="InterPro" id="IPR019987">
    <property type="entry name" value="GTP-bd_ribosome_bio_YsxC"/>
</dbReference>
<dbReference type="InterPro" id="IPR027417">
    <property type="entry name" value="P-loop_NTPase"/>
</dbReference>
<dbReference type="NCBIfam" id="TIGR03598">
    <property type="entry name" value="GTPase_YsxC"/>
    <property type="match status" value="1"/>
</dbReference>
<dbReference type="PANTHER" id="PTHR11649:SF13">
    <property type="entry name" value="ENGB-TYPE G DOMAIN-CONTAINING PROTEIN"/>
    <property type="match status" value="1"/>
</dbReference>
<dbReference type="PANTHER" id="PTHR11649">
    <property type="entry name" value="MSS1/TRME-RELATED GTP-BINDING PROTEIN"/>
    <property type="match status" value="1"/>
</dbReference>
<dbReference type="Pfam" id="PF01926">
    <property type="entry name" value="MMR_HSR1"/>
    <property type="match status" value="1"/>
</dbReference>
<dbReference type="SUPFAM" id="SSF52540">
    <property type="entry name" value="P-loop containing nucleoside triphosphate hydrolases"/>
    <property type="match status" value="1"/>
</dbReference>
<dbReference type="PROSITE" id="PS51706">
    <property type="entry name" value="G_ENGB"/>
    <property type="match status" value="1"/>
</dbReference>
<gene>
    <name evidence="1" type="primary">engB</name>
    <name type="ordered locus">BB0064</name>
</gene>
<keyword id="KW-0131">Cell cycle</keyword>
<keyword id="KW-0132">Cell division</keyword>
<keyword id="KW-0342">GTP-binding</keyword>
<keyword id="KW-0460">Magnesium</keyword>
<keyword id="KW-0479">Metal-binding</keyword>
<keyword id="KW-0547">Nucleotide-binding</keyword>
<keyword id="KW-0717">Septation</keyword>
<name>ENGB_BORBR</name>
<proteinExistence type="inferred from homology"/>
<protein>
    <recommendedName>
        <fullName evidence="1">Probable GTP-binding protein EngB</fullName>
    </recommendedName>
</protein>
<sequence>MSLLHRASFYISAARLDQLPPAGAPEVCFVGRSNAGKSSAINVLCNQRRLAFSSKTPGRTRLINMFGLPDPLAPGEQLGFLVDLPGYGYASVAHREKEKWADILGGYLRDRASLAGIVLLIDIRRGVTDLDRRLTNFIAPTGRPVLALLTKADKLPYGQRMRTVFAVRKDLADIGALHMVPFSSTERIGLEEAGAHIENWISPKVVP</sequence>
<evidence type="ECO:0000255" key="1">
    <source>
        <dbReference type="HAMAP-Rule" id="MF_00321"/>
    </source>
</evidence>
<reference key="1">
    <citation type="journal article" date="2003" name="Nat. Genet.">
        <title>Comparative analysis of the genome sequences of Bordetella pertussis, Bordetella parapertussis and Bordetella bronchiseptica.</title>
        <authorList>
            <person name="Parkhill J."/>
            <person name="Sebaihia M."/>
            <person name="Preston A."/>
            <person name="Murphy L.D."/>
            <person name="Thomson N.R."/>
            <person name="Harris D.E."/>
            <person name="Holden M.T.G."/>
            <person name="Churcher C.M."/>
            <person name="Bentley S.D."/>
            <person name="Mungall K.L."/>
            <person name="Cerdeno-Tarraga A.-M."/>
            <person name="Temple L."/>
            <person name="James K.D."/>
            <person name="Harris B."/>
            <person name="Quail M.A."/>
            <person name="Achtman M."/>
            <person name="Atkin R."/>
            <person name="Baker S."/>
            <person name="Basham D."/>
            <person name="Bason N."/>
            <person name="Cherevach I."/>
            <person name="Chillingworth T."/>
            <person name="Collins M."/>
            <person name="Cronin A."/>
            <person name="Davis P."/>
            <person name="Doggett J."/>
            <person name="Feltwell T."/>
            <person name="Goble A."/>
            <person name="Hamlin N."/>
            <person name="Hauser H."/>
            <person name="Holroyd S."/>
            <person name="Jagels K."/>
            <person name="Leather S."/>
            <person name="Moule S."/>
            <person name="Norberczak H."/>
            <person name="O'Neil S."/>
            <person name="Ormond D."/>
            <person name="Price C."/>
            <person name="Rabbinowitsch E."/>
            <person name="Rutter S."/>
            <person name="Sanders M."/>
            <person name="Saunders D."/>
            <person name="Seeger K."/>
            <person name="Sharp S."/>
            <person name="Simmonds M."/>
            <person name="Skelton J."/>
            <person name="Squares R."/>
            <person name="Squares S."/>
            <person name="Stevens K."/>
            <person name="Unwin L."/>
            <person name="Whitehead S."/>
            <person name="Barrell B.G."/>
            <person name="Maskell D.J."/>
        </authorList>
    </citation>
    <scope>NUCLEOTIDE SEQUENCE [LARGE SCALE GENOMIC DNA]</scope>
    <source>
        <strain>ATCC BAA-588 / NCTC 13252 / RB50</strain>
    </source>
</reference>
<feature type="chain" id="PRO_0000266826" description="Probable GTP-binding protein EngB">
    <location>
        <begin position="1"/>
        <end position="207"/>
    </location>
</feature>
<feature type="domain" description="EngB-type G" evidence="1">
    <location>
        <begin position="23"/>
        <end position="203"/>
    </location>
</feature>
<feature type="binding site" evidence="1">
    <location>
        <begin position="31"/>
        <end position="38"/>
    </location>
    <ligand>
        <name>GTP</name>
        <dbReference type="ChEBI" id="CHEBI:37565"/>
    </ligand>
</feature>
<feature type="binding site" evidence="1">
    <location>
        <position position="38"/>
    </location>
    <ligand>
        <name>Mg(2+)</name>
        <dbReference type="ChEBI" id="CHEBI:18420"/>
    </ligand>
</feature>
<feature type="binding site" evidence="1">
    <location>
        <begin position="58"/>
        <end position="62"/>
    </location>
    <ligand>
        <name>GTP</name>
        <dbReference type="ChEBI" id="CHEBI:37565"/>
    </ligand>
</feature>
<feature type="binding site" evidence="1">
    <location>
        <position position="60"/>
    </location>
    <ligand>
        <name>Mg(2+)</name>
        <dbReference type="ChEBI" id="CHEBI:18420"/>
    </ligand>
</feature>
<feature type="binding site" evidence="1">
    <location>
        <begin position="83"/>
        <end position="86"/>
    </location>
    <ligand>
        <name>GTP</name>
        <dbReference type="ChEBI" id="CHEBI:37565"/>
    </ligand>
</feature>
<feature type="binding site" evidence="1">
    <location>
        <begin position="150"/>
        <end position="153"/>
    </location>
    <ligand>
        <name>GTP</name>
        <dbReference type="ChEBI" id="CHEBI:37565"/>
    </ligand>
</feature>
<feature type="binding site" evidence="1">
    <location>
        <begin position="182"/>
        <end position="184"/>
    </location>
    <ligand>
        <name>GTP</name>
        <dbReference type="ChEBI" id="CHEBI:37565"/>
    </ligand>
</feature>
<accession>Q7WR92</accession>